<comment type="function">
    <text evidence="1">Catalyzes the 2-thiolation of uridine at the wobble position (U34) of tRNA, leading to the formation of s(2)U34.</text>
</comment>
<comment type="catalytic activity">
    <reaction evidence="1">
        <text>S-sulfanyl-L-cysteinyl-[protein] + uridine(34) in tRNA + AH2 + ATP = 2-thiouridine(34) in tRNA + L-cysteinyl-[protein] + A + AMP + diphosphate + H(+)</text>
        <dbReference type="Rhea" id="RHEA:47032"/>
        <dbReference type="Rhea" id="RHEA-COMP:10131"/>
        <dbReference type="Rhea" id="RHEA-COMP:11726"/>
        <dbReference type="Rhea" id="RHEA-COMP:11727"/>
        <dbReference type="Rhea" id="RHEA-COMP:11728"/>
        <dbReference type="ChEBI" id="CHEBI:13193"/>
        <dbReference type="ChEBI" id="CHEBI:15378"/>
        <dbReference type="ChEBI" id="CHEBI:17499"/>
        <dbReference type="ChEBI" id="CHEBI:29950"/>
        <dbReference type="ChEBI" id="CHEBI:30616"/>
        <dbReference type="ChEBI" id="CHEBI:33019"/>
        <dbReference type="ChEBI" id="CHEBI:61963"/>
        <dbReference type="ChEBI" id="CHEBI:65315"/>
        <dbReference type="ChEBI" id="CHEBI:87170"/>
        <dbReference type="ChEBI" id="CHEBI:456215"/>
        <dbReference type="EC" id="2.8.1.13"/>
    </reaction>
</comment>
<comment type="subcellular location">
    <subcellularLocation>
        <location evidence="1">Cytoplasm</location>
    </subcellularLocation>
</comment>
<comment type="similarity">
    <text evidence="1">Belongs to the MnmA/TRMU family.</text>
</comment>
<organism>
    <name type="scientific">Pelobacter propionicus (strain DSM 2379 / NBRC 103807 / OttBd1)</name>
    <dbReference type="NCBI Taxonomy" id="338966"/>
    <lineage>
        <taxon>Bacteria</taxon>
        <taxon>Pseudomonadati</taxon>
        <taxon>Thermodesulfobacteriota</taxon>
        <taxon>Desulfuromonadia</taxon>
        <taxon>Desulfuromonadales</taxon>
        <taxon>Desulfuromonadaceae</taxon>
        <taxon>Pelobacter</taxon>
    </lineage>
</organism>
<dbReference type="EC" id="2.8.1.13" evidence="1"/>
<dbReference type="EMBL" id="CP000482">
    <property type="protein sequence ID" value="ABK99449.1"/>
    <property type="molecule type" value="Genomic_DNA"/>
</dbReference>
<dbReference type="RefSeq" id="WP_011735725.1">
    <property type="nucleotide sequence ID" value="NC_008609.1"/>
</dbReference>
<dbReference type="SMR" id="A1AQ29"/>
<dbReference type="STRING" id="338966.Ppro_1837"/>
<dbReference type="KEGG" id="ppd:Ppro_1837"/>
<dbReference type="eggNOG" id="COG0482">
    <property type="taxonomic scope" value="Bacteria"/>
</dbReference>
<dbReference type="HOGENOM" id="CLU_035188_0_0_7"/>
<dbReference type="OrthoDB" id="9800696at2"/>
<dbReference type="Proteomes" id="UP000006732">
    <property type="component" value="Chromosome"/>
</dbReference>
<dbReference type="GO" id="GO:0005737">
    <property type="term" value="C:cytoplasm"/>
    <property type="evidence" value="ECO:0007669"/>
    <property type="project" value="UniProtKB-SubCell"/>
</dbReference>
<dbReference type="GO" id="GO:0005524">
    <property type="term" value="F:ATP binding"/>
    <property type="evidence" value="ECO:0007669"/>
    <property type="project" value="UniProtKB-KW"/>
</dbReference>
<dbReference type="GO" id="GO:0000049">
    <property type="term" value="F:tRNA binding"/>
    <property type="evidence" value="ECO:0007669"/>
    <property type="project" value="UniProtKB-KW"/>
</dbReference>
<dbReference type="GO" id="GO:0103016">
    <property type="term" value="F:tRNA-uridine 2-sulfurtransferase activity"/>
    <property type="evidence" value="ECO:0007669"/>
    <property type="project" value="UniProtKB-EC"/>
</dbReference>
<dbReference type="GO" id="GO:0002143">
    <property type="term" value="P:tRNA wobble position uridine thiolation"/>
    <property type="evidence" value="ECO:0007669"/>
    <property type="project" value="TreeGrafter"/>
</dbReference>
<dbReference type="CDD" id="cd01998">
    <property type="entry name" value="MnmA_TRMU-like"/>
    <property type="match status" value="1"/>
</dbReference>
<dbReference type="FunFam" id="2.30.30.280:FF:000001">
    <property type="entry name" value="tRNA-specific 2-thiouridylase MnmA"/>
    <property type="match status" value="1"/>
</dbReference>
<dbReference type="FunFam" id="2.40.30.10:FF:000023">
    <property type="entry name" value="tRNA-specific 2-thiouridylase MnmA"/>
    <property type="match status" value="1"/>
</dbReference>
<dbReference type="Gene3D" id="2.30.30.280">
    <property type="entry name" value="Adenine nucleotide alpha hydrolases-like domains"/>
    <property type="match status" value="1"/>
</dbReference>
<dbReference type="Gene3D" id="3.40.50.620">
    <property type="entry name" value="HUPs"/>
    <property type="match status" value="1"/>
</dbReference>
<dbReference type="Gene3D" id="2.40.30.10">
    <property type="entry name" value="Translation factors"/>
    <property type="match status" value="1"/>
</dbReference>
<dbReference type="HAMAP" id="MF_00144">
    <property type="entry name" value="tRNA_thiouridyl_MnmA"/>
    <property type="match status" value="1"/>
</dbReference>
<dbReference type="InterPro" id="IPR004506">
    <property type="entry name" value="MnmA-like"/>
</dbReference>
<dbReference type="InterPro" id="IPR046885">
    <property type="entry name" value="MnmA-like_C"/>
</dbReference>
<dbReference type="InterPro" id="IPR046884">
    <property type="entry name" value="MnmA-like_central"/>
</dbReference>
<dbReference type="InterPro" id="IPR023382">
    <property type="entry name" value="MnmA-like_central_sf"/>
</dbReference>
<dbReference type="InterPro" id="IPR014729">
    <property type="entry name" value="Rossmann-like_a/b/a_fold"/>
</dbReference>
<dbReference type="NCBIfam" id="NF001138">
    <property type="entry name" value="PRK00143.1"/>
    <property type="match status" value="1"/>
</dbReference>
<dbReference type="NCBIfam" id="TIGR00420">
    <property type="entry name" value="trmU"/>
    <property type="match status" value="1"/>
</dbReference>
<dbReference type="PANTHER" id="PTHR11933:SF5">
    <property type="entry name" value="MITOCHONDRIAL TRNA-SPECIFIC 2-THIOURIDYLASE 1"/>
    <property type="match status" value="1"/>
</dbReference>
<dbReference type="PANTHER" id="PTHR11933">
    <property type="entry name" value="TRNA 5-METHYLAMINOMETHYL-2-THIOURIDYLATE -METHYLTRANSFERASE"/>
    <property type="match status" value="1"/>
</dbReference>
<dbReference type="Pfam" id="PF03054">
    <property type="entry name" value="tRNA_Me_trans"/>
    <property type="match status" value="1"/>
</dbReference>
<dbReference type="Pfam" id="PF20258">
    <property type="entry name" value="tRNA_Me_trans_C"/>
    <property type="match status" value="1"/>
</dbReference>
<dbReference type="Pfam" id="PF20259">
    <property type="entry name" value="tRNA_Me_trans_M"/>
    <property type="match status" value="1"/>
</dbReference>
<dbReference type="SUPFAM" id="SSF52402">
    <property type="entry name" value="Adenine nucleotide alpha hydrolases-like"/>
    <property type="match status" value="1"/>
</dbReference>
<feature type="chain" id="PRO_0000349732" description="tRNA-specific 2-thiouridylase MnmA">
    <location>
        <begin position="1"/>
        <end position="355"/>
    </location>
</feature>
<feature type="region of interest" description="Interaction with tRNA" evidence="1">
    <location>
        <begin position="140"/>
        <end position="142"/>
    </location>
</feature>
<feature type="region of interest" description="Interaction with tRNA" evidence="1">
    <location>
        <begin position="296"/>
        <end position="297"/>
    </location>
</feature>
<feature type="active site" description="Nucleophile" evidence="1">
    <location>
        <position position="93"/>
    </location>
</feature>
<feature type="active site" description="Cysteine persulfide intermediate" evidence="1">
    <location>
        <position position="191"/>
    </location>
</feature>
<feature type="binding site" evidence="1">
    <location>
        <begin position="6"/>
        <end position="13"/>
    </location>
    <ligand>
        <name>ATP</name>
        <dbReference type="ChEBI" id="CHEBI:30616"/>
    </ligand>
</feature>
<feature type="binding site" evidence="1">
    <location>
        <position position="32"/>
    </location>
    <ligand>
        <name>ATP</name>
        <dbReference type="ChEBI" id="CHEBI:30616"/>
    </ligand>
</feature>
<feature type="binding site" evidence="1">
    <location>
        <position position="117"/>
    </location>
    <ligand>
        <name>ATP</name>
        <dbReference type="ChEBI" id="CHEBI:30616"/>
    </ligand>
</feature>
<feature type="site" description="Interaction with tRNA" evidence="1">
    <location>
        <position position="118"/>
    </location>
</feature>
<feature type="site" description="Interaction with tRNA" evidence="1">
    <location>
        <position position="329"/>
    </location>
</feature>
<feature type="disulfide bond" description="Alternate" evidence="1">
    <location>
        <begin position="93"/>
        <end position="191"/>
    </location>
</feature>
<gene>
    <name evidence="1" type="primary">mnmA</name>
    <name type="ordered locus">Ppro_1837</name>
</gene>
<accession>A1AQ29</accession>
<reference key="1">
    <citation type="submission" date="2006-10" db="EMBL/GenBank/DDBJ databases">
        <title>Complete sequence of chromosome of Pelobacter propionicus DSM 2379.</title>
        <authorList>
            <consortium name="US DOE Joint Genome Institute"/>
            <person name="Copeland A."/>
            <person name="Lucas S."/>
            <person name="Lapidus A."/>
            <person name="Barry K."/>
            <person name="Detter J.C."/>
            <person name="Glavina del Rio T."/>
            <person name="Hammon N."/>
            <person name="Israni S."/>
            <person name="Dalin E."/>
            <person name="Tice H."/>
            <person name="Pitluck S."/>
            <person name="Saunders E."/>
            <person name="Brettin T."/>
            <person name="Bruce D."/>
            <person name="Han C."/>
            <person name="Tapia R."/>
            <person name="Schmutz J."/>
            <person name="Larimer F."/>
            <person name="Land M."/>
            <person name="Hauser L."/>
            <person name="Kyrpides N."/>
            <person name="Kim E."/>
            <person name="Lovley D."/>
            <person name="Richardson P."/>
        </authorList>
    </citation>
    <scope>NUCLEOTIDE SEQUENCE [LARGE SCALE GENOMIC DNA]</scope>
    <source>
        <strain>DSM 2379 / NBRC 103807 / OttBd1</strain>
    </source>
</reference>
<sequence length="355" mass="38862">MKIAVAMSGGVDSSVAAALLKEQGHEIIGITMQFFAPSCQGAGTPAHDAAVVAAHLGITHHLLDLEHDFRQLIINDFISQYRSGQTPNPCVRCNRFVKFGLLLDAARERGADLLATGHYARTSIDPDGTRHLRVAANLRKDQTYFLHTLSQERLARVVFPLGDIGSKDEVRDLAHRFGLPVAEKGDSQEVCFIPNDDYVSYLEENCALGGETGDIVHVNGRLLGRHRGTHRYTIGQRKGLGIAWSEPLYVVEIDAARKLVVVGEEPHVYAQGLKAEEVGWIIAPGKEEFEASCKIRYRHQPVACRVTLLQGGACRVLFHEPLKAVTPGQSVVFYQDDEVLGGGRITAAIKRDGEA</sequence>
<proteinExistence type="inferred from homology"/>
<name>MNMA_PELPD</name>
<keyword id="KW-0067">ATP-binding</keyword>
<keyword id="KW-0963">Cytoplasm</keyword>
<keyword id="KW-1015">Disulfide bond</keyword>
<keyword id="KW-0547">Nucleotide-binding</keyword>
<keyword id="KW-1185">Reference proteome</keyword>
<keyword id="KW-0694">RNA-binding</keyword>
<keyword id="KW-0808">Transferase</keyword>
<keyword id="KW-0819">tRNA processing</keyword>
<keyword id="KW-0820">tRNA-binding</keyword>
<evidence type="ECO:0000255" key="1">
    <source>
        <dbReference type="HAMAP-Rule" id="MF_00144"/>
    </source>
</evidence>
<protein>
    <recommendedName>
        <fullName evidence="1">tRNA-specific 2-thiouridylase MnmA</fullName>
        <ecNumber evidence="1">2.8.1.13</ecNumber>
    </recommendedName>
</protein>